<feature type="chain" id="PRO_1000055100" description="ATP synthase subunit beta">
    <location>
        <begin position="1"/>
        <end position="464"/>
    </location>
</feature>
<feature type="binding site" evidence="1">
    <location>
        <begin position="153"/>
        <end position="160"/>
    </location>
    <ligand>
        <name>ATP</name>
        <dbReference type="ChEBI" id="CHEBI:30616"/>
    </ligand>
</feature>
<organism>
    <name type="scientific">Burkholderia vietnamiensis (strain G4 / LMG 22486)</name>
    <name type="common">Burkholderia cepacia (strain R1808)</name>
    <dbReference type="NCBI Taxonomy" id="269482"/>
    <lineage>
        <taxon>Bacteria</taxon>
        <taxon>Pseudomonadati</taxon>
        <taxon>Pseudomonadota</taxon>
        <taxon>Betaproteobacteria</taxon>
        <taxon>Burkholderiales</taxon>
        <taxon>Burkholderiaceae</taxon>
        <taxon>Burkholderia</taxon>
        <taxon>Burkholderia cepacia complex</taxon>
    </lineage>
</organism>
<comment type="function">
    <text evidence="1">Produces ATP from ADP in the presence of a proton gradient across the membrane. The catalytic sites are hosted primarily by the beta subunits.</text>
</comment>
<comment type="catalytic activity">
    <reaction evidence="1">
        <text>ATP + H2O + 4 H(+)(in) = ADP + phosphate + 5 H(+)(out)</text>
        <dbReference type="Rhea" id="RHEA:57720"/>
        <dbReference type="ChEBI" id="CHEBI:15377"/>
        <dbReference type="ChEBI" id="CHEBI:15378"/>
        <dbReference type="ChEBI" id="CHEBI:30616"/>
        <dbReference type="ChEBI" id="CHEBI:43474"/>
        <dbReference type="ChEBI" id="CHEBI:456216"/>
        <dbReference type="EC" id="7.1.2.2"/>
    </reaction>
</comment>
<comment type="subunit">
    <text evidence="1">F-type ATPases have 2 components, CF(1) - the catalytic core - and CF(0) - the membrane proton channel. CF(1) has five subunits: alpha(3), beta(3), gamma(1), delta(1), epsilon(1). CF(0) has three main subunits: a(1), b(2) and c(9-12). The alpha and beta chains form an alternating ring which encloses part of the gamma chain. CF(1) is attached to CF(0) by a central stalk formed by the gamma and epsilon chains, while a peripheral stalk is formed by the delta and b chains.</text>
</comment>
<comment type="subcellular location">
    <subcellularLocation>
        <location evidence="1">Cell inner membrane</location>
        <topology evidence="1">Peripheral membrane protein</topology>
    </subcellularLocation>
</comment>
<comment type="similarity">
    <text evidence="1">Belongs to the ATPase alpha/beta chains family.</text>
</comment>
<name>ATPB_BURVG</name>
<protein>
    <recommendedName>
        <fullName evidence="1">ATP synthase subunit beta</fullName>
        <ecNumber evidence="1">7.1.2.2</ecNumber>
    </recommendedName>
    <alternativeName>
        <fullName evidence="1">ATP synthase F1 sector subunit beta</fullName>
    </alternativeName>
    <alternativeName>
        <fullName evidence="1">F-ATPase subunit beta</fullName>
    </alternativeName>
</protein>
<dbReference type="EC" id="7.1.2.2" evidence="1"/>
<dbReference type="EMBL" id="CP000614">
    <property type="protein sequence ID" value="ABO53138.1"/>
    <property type="molecule type" value="Genomic_DNA"/>
</dbReference>
<dbReference type="SMR" id="A4JA35"/>
<dbReference type="KEGG" id="bvi:Bcep1808_0115"/>
<dbReference type="eggNOG" id="COG0055">
    <property type="taxonomic scope" value="Bacteria"/>
</dbReference>
<dbReference type="HOGENOM" id="CLU_022398_0_2_4"/>
<dbReference type="Proteomes" id="UP000002287">
    <property type="component" value="Chromosome 1"/>
</dbReference>
<dbReference type="GO" id="GO:0005886">
    <property type="term" value="C:plasma membrane"/>
    <property type="evidence" value="ECO:0007669"/>
    <property type="project" value="UniProtKB-SubCell"/>
</dbReference>
<dbReference type="GO" id="GO:0045259">
    <property type="term" value="C:proton-transporting ATP synthase complex"/>
    <property type="evidence" value="ECO:0007669"/>
    <property type="project" value="UniProtKB-KW"/>
</dbReference>
<dbReference type="GO" id="GO:0005524">
    <property type="term" value="F:ATP binding"/>
    <property type="evidence" value="ECO:0007669"/>
    <property type="project" value="UniProtKB-UniRule"/>
</dbReference>
<dbReference type="GO" id="GO:0016887">
    <property type="term" value="F:ATP hydrolysis activity"/>
    <property type="evidence" value="ECO:0007669"/>
    <property type="project" value="InterPro"/>
</dbReference>
<dbReference type="GO" id="GO:0046933">
    <property type="term" value="F:proton-transporting ATP synthase activity, rotational mechanism"/>
    <property type="evidence" value="ECO:0007669"/>
    <property type="project" value="UniProtKB-UniRule"/>
</dbReference>
<dbReference type="CDD" id="cd18110">
    <property type="entry name" value="ATP-synt_F1_beta_C"/>
    <property type="match status" value="1"/>
</dbReference>
<dbReference type="CDD" id="cd18115">
    <property type="entry name" value="ATP-synt_F1_beta_N"/>
    <property type="match status" value="1"/>
</dbReference>
<dbReference type="CDD" id="cd01133">
    <property type="entry name" value="F1-ATPase_beta_CD"/>
    <property type="match status" value="1"/>
</dbReference>
<dbReference type="FunFam" id="1.10.1140.10:FF:000001">
    <property type="entry name" value="ATP synthase subunit beta"/>
    <property type="match status" value="1"/>
</dbReference>
<dbReference type="FunFam" id="3.40.50.300:FF:000004">
    <property type="entry name" value="ATP synthase subunit beta"/>
    <property type="match status" value="1"/>
</dbReference>
<dbReference type="Gene3D" id="2.40.10.170">
    <property type="match status" value="1"/>
</dbReference>
<dbReference type="Gene3D" id="1.10.1140.10">
    <property type="entry name" value="Bovine Mitochondrial F1-atpase, Atp Synthase Beta Chain, Chain D, domain 3"/>
    <property type="match status" value="1"/>
</dbReference>
<dbReference type="Gene3D" id="3.40.50.300">
    <property type="entry name" value="P-loop containing nucleotide triphosphate hydrolases"/>
    <property type="match status" value="1"/>
</dbReference>
<dbReference type="HAMAP" id="MF_01347">
    <property type="entry name" value="ATP_synth_beta_bact"/>
    <property type="match status" value="1"/>
</dbReference>
<dbReference type="InterPro" id="IPR003593">
    <property type="entry name" value="AAA+_ATPase"/>
</dbReference>
<dbReference type="InterPro" id="IPR055190">
    <property type="entry name" value="ATP-synt_VA_C"/>
</dbReference>
<dbReference type="InterPro" id="IPR005722">
    <property type="entry name" value="ATP_synth_F1_bsu"/>
</dbReference>
<dbReference type="InterPro" id="IPR020003">
    <property type="entry name" value="ATPase_a/bsu_AS"/>
</dbReference>
<dbReference type="InterPro" id="IPR050053">
    <property type="entry name" value="ATPase_alpha/beta_chains"/>
</dbReference>
<dbReference type="InterPro" id="IPR004100">
    <property type="entry name" value="ATPase_F1/V1/A1_a/bsu_N"/>
</dbReference>
<dbReference type="InterPro" id="IPR036121">
    <property type="entry name" value="ATPase_F1/V1/A1_a/bsu_N_sf"/>
</dbReference>
<dbReference type="InterPro" id="IPR000194">
    <property type="entry name" value="ATPase_F1/V1/A1_a/bsu_nucl-bd"/>
</dbReference>
<dbReference type="InterPro" id="IPR024034">
    <property type="entry name" value="ATPase_F1/V1_b/a_C"/>
</dbReference>
<dbReference type="InterPro" id="IPR027417">
    <property type="entry name" value="P-loop_NTPase"/>
</dbReference>
<dbReference type="NCBIfam" id="TIGR01039">
    <property type="entry name" value="atpD"/>
    <property type="match status" value="1"/>
</dbReference>
<dbReference type="PANTHER" id="PTHR15184">
    <property type="entry name" value="ATP SYNTHASE"/>
    <property type="match status" value="1"/>
</dbReference>
<dbReference type="PANTHER" id="PTHR15184:SF71">
    <property type="entry name" value="ATP SYNTHASE SUBUNIT BETA, MITOCHONDRIAL"/>
    <property type="match status" value="1"/>
</dbReference>
<dbReference type="Pfam" id="PF00006">
    <property type="entry name" value="ATP-synt_ab"/>
    <property type="match status" value="1"/>
</dbReference>
<dbReference type="Pfam" id="PF02874">
    <property type="entry name" value="ATP-synt_ab_N"/>
    <property type="match status" value="1"/>
</dbReference>
<dbReference type="Pfam" id="PF22919">
    <property type="entry name" value="ATP-synt_VA_C"/>
    <property type="match status" value="1"/>
</dbReference>
<dbReference type="SMART" id="SM00382">
    <property type="entry name" value="AAA"/>
    <property type="match status" value="1"/>
</dbReference>
<dbReference type="SUPFAM" id="SSF47917">
    <property type="entry name" value="C-terminal domain of alpha and beta subunits of F1 ATP synthase"/>
    <property type="match status" value="1"/>
</dbReference>
<dbReference type="SUPFAM" id="SSF50615">
    <property type="entry name" value="N-terminal domain of alpha and beta subunits of F1 ATP synthase"/>
    <property type="match status" value="1"/>
</dbReference>
<dbReference type="SUPFAM" id="SSF52540">
    <property type="entry name" value="P-loop containing nucleoside triphosphate hydrolases"/>
    <property type="match status" value="1"/>
</dbReference>
<dbReference type="PROSITE" id="PS00152">
    <property type="entry name" value="ATPASE_ALPHA_BETA"/>
    <property type="match status" value="1"/>
</dbReference>
<gene>
    <name evidence="1" type="primary">atpD</name>
    <name type="ordered locus">Bcep1808_0115</name>
</gene>
<evidence type="ECO:0000255" key="1">
    <source>
        <dbReference type="HAMAP-Rule" id="MF_01347"/>
    </source>
</evidence>
<sequence length="464" mass="50649">MSTAALVEGKIVQCIGAVIDVEFPRDSMPKIYDALILDGSELTLEVQQQLGDGVVRTICLGASDGLRRGLTVKNTAKPISVPVGKPTLGRIMDVLGRPIDEAGPIESEHTRSIHQKAPAFDELSPSTELLETGIKVIDLICPFAKGGKVGLFGGAGVGKTVNMMELINNIAKEHGGYSVFAGVGERTREGNDFYHEMKDSNVLDKVALVYGQMNEPPGNRLRVALTGLTMAEHFRDEGLDVLFFVDNIYRFTLAGTEVSALLGRMPSAVGYQPTLAEEMGKLQERITSTKKGSITSVQAVYVPADDLTDPSPATTFGHLDATVVLSRDIASLGIYPAVDPLDSTSRQIDPNVIGEEHYTITRRVQQTLQRYKELRDIIAILGMDELSPEDKLSVARARKIQRFLSQPFHVAEVFTGSPGKYVPLKETIRGFKMIVDGECDHLPEQAFYMVGTIDEAFEKAKKIQ</sequence>
<proteinExistence type="inferred from homology"/>
<keyword id="KW-0066">ATP synthesis</keyword>
<keyword id="KW-0067">ATP-binding</keyword>
<keyword id="KW-0997">Cell inner membrane</keyword>
<keyword id="KW-1003">Cell membrane</keyword>
<keyword id="KW-0139">CF(1)</keyword>
<keyword id="KW-0375">Hydrogen ion transport</keyword>
<keyword id="KW-0406">Ion transport</keyword>
<keyword id="KW-0472">Membrane</keyword>
<keyword id="KW-0547">Nucleotide-binding</keyword>
<keyword id="KW-1278">Translocase</keyword>
<keyword id="KW-0813">Transport</keyword>
<accession>A4JA35</accession>
<reference key="1">
    <citation type="submission" date="2007-03" db="EMBL/GenBank/DDBJ databases">
        <title>Complete sequence of chromosome 1 of Burkholderia vietnamiensis G4.</title>
        <authorList>
            <consortium name="US DOE Joint Genome Institute"/>
            <person name="Copeland A."/>
            <person name="Lucas S."/>
            <person name="Lapidus A."/>
            <person name="Barry K."/>
            <person name="Detter J.C."/>
            <person name="Glavina del Rio T."/>
            <person name="Hammon N."/>
            <person name="Israni S."/>
            <person name="Dalin E."/>
            <person name="Tice H."/>
            <person name="Pitluck S."/>
            <person name="Chain P."/>
            <person name="Malfatti S."/>
            <person name="Shin M."/>
            <person name="Vergez L."/>
            <person name="Schmutz J."/>
            <person name="Larimer F."/>
            <person name="Land M."/>
            <person name="Hauser L."/>
            <person name="Kyrpides N."/>
            <person name="Tiedje J."/>
            <person name="Richardson P."/>
        </authorList>
    </citation>
    <scope>NUCLEOTIDE SEQUENCE [LARGE SCALE GENOMIC DNA]</scope>
    <source>
        <strain>G4 / LMG 22486</strain>
    </source>
</reference>